<dbReference type="EC" id="4.1.99.12" evidence="1"/>
<dbReference type="EMBL" id="BX950851">
    <property type="protein sequence ID" value="CAG73811.1"/>
    <property type="molecule type" value="Genomic_DNA"/>
</dbReference>
<dbReference type="RefSeq" id="WP_011092501.1">
    <property type="nucleotide sequence ID" value="NC_004547.2"/>
</dbReference>
<dbReference type="SMR" id="Q6D8S3"/>
<dbReference type="STRING" id="218491.ECA0899"/>
<dbReference type="KEGG" id="eca:ECA0899"/>
<dbReference type="PATRIC" id="fig|218491.5.peg.903"/>
<dbReference type="eggNOG" id="COG0108">
    <property type="taxonomic scope" value="Bacteria"/>
</dbReference>
<dbReference type="HOGENOM" id="CLU_020273_3_0_6"/>
<dbReference type="OrthoDB" id="9793111at2"/>
<dbReference type="UniPathway" id="UPA00275">
    <property type="reaction ID" value="UER00399"/>
</dbReference>
<dbReference type="Proteomes" id="UP000007966">
    <property type="component" value="Chromosome"/>
</dbReference>
<dbReference type="GO" id="GO:0005829">
    <property type="term" value="C:cytosol"/>
    <property type="evidence" value="ECO:0007669"/>
    <property type="project" value="TreeGrafter"/>
</dbReference>
<dbReference type="GO" id="GO:0008686">
    <property type="term" value="F:3,4-dihydroxy-2-butanone-4-phosphate synthase activity"/>
    <property type="evidence" value="ECO:0007669"/>
    <property type="project" value="UniProtKB-UniRule"/>
</dbReference>
<dbReference type="GO" id="GO:0000287">
    <property type="term" value="F:magnesium ion binding"/>
    <property type="evidence" value="ECO:0007669"/>
    <property type="project" value="UniProtKB-UniRule"/>
</dbReference>
<dbReference type="GO" id="GO:0030145">
    <property type="term" value="F:manganese ion binding"/>
    <property type="evidence" value="ECO:0007669"/>
    <property type="project" value="UniProtKB-UniRule"/>
</dbReference>
<dbReference type="GO" id="GO:0009231">
    <property type="term" value="P:riboflavin biosynthetic process"/>
    <property type="evidence" value="ECO:0007669"/>
    <property type="project" value="UniProtKB-UniRule"/>
</dbReference>
<dbReference type="FunFam" id="3.90.870.10:FF:000002">
    <property type="entry name" value="3,4-dihydroxy-2-butanone 4-phosphate synthase"/>
    <property type="match status" value="1"/>
</dbReference>
<dbReference type="Gene3D" id="3.90.870.10">
    <property type="entry name" value="DHBP synthase"/>
    <property type="match status" value="1"/>
</dbReference>
<dbReference type="HAMAP" id="MF_00180">
    <property type="entry name" value="RibB"/>
    <property type="match status" value="1"/>
</dbReference>
<dbReference type="InterPro" id="IPR017945">
    <property type="entry name" value="DHBP_synth_RibB-like_a/b_dom"/>
</dbReference>
<dbReference type="InterPro" id="IPR000422">
    <property type="entry name" value="DHBP_synthase_RibB"/>
</dbReference>
<dbReference type="NCBIfam" id="TIGR00506">
    <property type="entry name" value="ribB"/>
    <property type="match status" value="1"/>
</dbReference>
<dbReference type="PANTHER" id="PTHR21327:SF38">
    <property type="entry name" value="3,4-DIHYDROXY-2-BUTANONE 4-PHOSPHATE SYNTHASE"/>
    <property type="match status" value="1"/>
</dbReference>
<dbReference type="PANTHER" id="PTHR21327">
    <property type="entry name" value="GTP CYCLOHYDROLASE II-RELATED"/>
    <property type="match status" value="1"/>
</dbReference>
<dbReference type="Pfam" id="PF00926">
    <property type="entry name" value="DHBP_synthase"/>
    <property type="match status" value="1"/>
</dbReference>
<dbReference type="SUPFAM" id="SSF55821">
    <property type="entry name" value="YrdC/RibB"/>
    <property type="match status" value="1"/>
</dbReference>
<sequence>MNQTLLSEFGNPTERVERALDALRHGRGVLVLDDEDRENEGDMIFSAESMTVEQMALTIRHGSGIVCLCLTEERRQQLELPMMVEKNSSHYQTAFTVTIEAAEGVTTGVSAADRLTTIRAAIADNARPSDLNRPGHVFPLRAQPGGVLTRGGHTEATVDLMTLAGLKPSGVLCELTNDDGSMAHAPEVIAFAKQHDMLVLTIEDLVAYRIAAERKAS</sequence>
<protein>
    <recommendedName>
        <fullName evidence="1">3,4-dihydroxy-2-butanone 4-phosphate synthase</fullName>
        <shortName evidence="1">DHBP synthase</shortName>
        <ecNumber evidence="1">4.1.99.12</ecNumber>
    </recommendedName>
</protein>
<reference key="1">
    <citation type="journal article" date="2004" name="Proc. Natl. Acad. Sci. U.S.A.">
        <title>Genome sequence of the enterobacterial phytopathogen Erwinia carotovora subsp. atroseptica and characterization of virulence factors.</title>
        <authorList>
            <person name="Bell K.S."/>
            <person name="Sebaihia M."/>
            <person name="Pritchard L."/>
            <person name="Holden M.T.G."/>
            <person name="Hyman L.J."/>
            <person name="Holeva M.C."/>
            <person name="Thomson N.R."/>
            <person name="Bentley S.D."/>
            <person name="Churcher L.J.C."/>
            <person name="Mungall K."/>
            <person name="Atkin R."/>
            <person name="Bason N."/>
            <person name="Brooks K."/>
            <person name="Chillingworth T."/>
            <person name="Clark K."/>
            <person name="Doggett J."/>
            <person name="Fraser A."/>
            <person name="Hance Z."/>
            <person name="Hauser H."/>
            <person name="Jagels K."/>
            <person name="Moule S."/>
            <person name="Norbertczak H."/>
            <person name="Ormond D."/>
            <person name="Price C."/>
            <person name="Quail M.A."/>
            <person name="Sanders M."/>
            <person name="Walker D."/>
            <person name="Whitehead S."/>
            <person name="Salmond G.P.C."/>
            <person name="Birch P.R.J."/>
            <person name="Parkhill J."/>
            <person name="Toth I.K."/>
        </authorList>
    </citation>
    <scope>NUCLEOTIDE SEQUENCE [LARGE SCALE GENOMIC DNA]</scope>
    <source>
        <strain>SCRI 1043 / ATCC BAA-672</strain>
    </source>
</reference>
<name>RIBB_PECAS</name>
<organism>
    <name type="scientific">Pectobacterium atrosepticum (strain SCRI 1043 / ATCC BAA-672)</name>
    <name type="common">Erwinia carotovora subsp. atroseptica</name>
    <dbReference type="NCBI Taxonomy" id="218491"/>
    <lineage>
        <taxon>Bacteria</taxon>
        <taxon>Pseudomonadati</taxon>
        <taxon>Pseudomonadota</taxon>
        <taxon>Gammaproteobacteria</taxon>
        <taxon>Enterobacterales</taxon>
        <taxon>Pectobacteriaceae</taxon>
        <taxon>Pectobacterium</taxon>
    </lineage>
</organism>
<gene>
    <name evidence="1" type="primary">ribB</name>
    <name type="ordered locus">ECA0899</name>
</gene>
<accession>Q6D8S3</accession>
<keyword id="KW-0456">Lyase</keyword>
<keyword id="KW-0460">Magnesium</keyword>
<keyword id="KW-0464">Manganese</keyword>
<keyword id="KW-0479">Metal-binding</keyword>
<keyword id="KW-1185">Reference proteome</keyword>
<keyword id="KW-0686">Riboflavin biosynthesis</keyword>
<feature type="chain" id="PRO_1000040609" description="3,4-dihydroxy-2-butanone 4-phosphate synthase">
    <location>
        <begin position="1"/>
        <end position="217"/>
    </location>
</feature>
<feature type="binding site" evidence="1">
    <location>
        <begin position="37"/>
        <end position="38"/>
    </location>
    <ligand>
        <name>D-ribulose 5-phosphate</name>
        <dbReference type="ChEBI" id="CHEBI:58121"/>
    </ligand>
</feature>
<feature type="binding site" evidence="1">
    <location>
        <position position="38"/>
    </location>
    <ligand>
        <name>Mg(2+)</name>
        <dbReference type="ChEBI" id="CHEBI:18420"/>
        <label>1</label>
    </ligand>
</feature>
<feature type="binding site" evidence="1">
    <location>
        <position position="38"/>
    </location>
    <ligand>
        <name>Mg(2+)</name>
        <dbReference type="ChEBI" id="CHEBI:18420"/>
        <label>2</label>
    </ligand>
</feature>
<feature type="binding site" evidence="1">
    <location>
        <position position="42"/>
    </location>
    <ligand>
        <name>D-ribulose 5-phosphate</name>
        <dbReference type="ChEBI" id="CHEBI:58121"/>
    </ligand>
</feature>
<feature type="binding site" evidence="1">
    <location>
        <begin position="150"/>
        <end position="154"/>
    </location>
    <ligand>
        <name>D-ribulose 5-phosphate</name>
        <dbReference type="ChEBI" id="CHEBI:58121"/>
    </ligand>
</feature>
<feature type="binding site" evidence="1">
    <location>
        <position position="153"/>
    </location>
    <ligand>
        <name>Mg(2+)</name>
        <dbReference type="ChEBI" id="CHEBI:18420"/>
        <label>2</label>
    </ligand>
</feature>
<feature type="binding site" evidence="1">
    <location>
        <position position="174"/>
    </location>
    <ligand>
        <name>D-ribulose 5-phosphate</name>
        <dbReference type="ChEBI" id="CHEBI:58121"/>
    </ligand>
</feature>
<feature type="site" description="Essential for catalytic activity" evidence="1">
    <location>
        <position position="136"/>
    </location>
</feature>
<feature type="site" description="Essential for catalytic activity" evidence="1">
    <location>
        <position position="174"/>
    </location>
</feature>
<comment type="function">
    <text evidence="1">Catalyzes the conversion of D-ribulose 5-phosphate to formate and 3,4-dihydroxy-2-butanone 4-phosphate.</text>
</comment>
<comment type="catalytic activity">
    <reaction evidence="1">
        <text>D-ribulose 5-phosphate = (2S)-2-hydroxy-3-oxobutyl phosphate + formate + H(+)</text>
        <dbReference type="Rhea" id="RHEA:18457"/>
        <dbReference type="ChEBI" id="CHEBI:15378"/>
        <dbReference type="ChEBI" id="CHEBI:15740"/>
        <dbReference type="ChEBI" id="CHEBI:58121"/>
        <dbReference type="ChEBI" id="CHEBI:58830"/>
        <dbReference type="EC" id="4.1.99.12"/>
    </reaction>
</comment>
<comment type="cofactor">
    <cofactor evidence="1">
        <name>Mg(2+)</name>
        <dbReference type="ChEBI" id="CHEBI:18420"/>
    </cofactor>
    <cofactor evidence="1">
        <name>Mn(2+)</name>
        <dbReference type="ChEBI" id="CHEBI:29035"/>
    </cofactor>
    <text evidence="1">Binds 2 divalent metal cations per subunit. Magnesium or manganese.</text>
</comment>
<comment type="pathway">
    <text evidence="1">Cofactor biosynthesis; riboflavin biosynthesis; 2-hydroxy-3-oxobutyl phosphate from D-ribulose 5-phosphate: step 1/1.</text>
</comment>
<comment type="subunit">
    <text evidence="1">Homodimer.</text>
</comment>
<comment type="similarity">
    <text evidence="1">Belongs to the DHBP synthase family.</text>
</comment>
<evidence type="ECO:0000255" key="1">
    <source>
        <dbReference type="HAMAP-Rule" id="MF_00180"/>
    </source>
</evidence>
<proteinExistence type="inferred from homology"/>